<gene>
    <name type="ordered locus">MT0653</name>
</gene>
<reference key="1">
    <citation type="journal article" date="2002" name="J. Bacteriol.">
        <title>Whole-genome comparison of Mycobacterium tuberculosis clinical and laboratory strains.</title>
        <authorList>
            <person name="Fleischmann R.D."/>
            <person name="Alland D."/>
            <person name="Eisen J.A."/>
            <person name="Carpenter L."/>
            <person name="White O."/>
            <person name="Peterson J.D."/>
            <person name="DeBoy R.T."/>
            <person name="Dodson R.J."/>
            <person name="Gwinn M.L."/>
            <person name="Haft D.H."/>
            <person name="Hickey E.K."/>
            <person name="Kolonay J.F."/>
            <person name="Nelson W.C."/>
            <person name="Umayam L.A."/>
            <person name="Ermolaeva M.D."/>
            <person name="Salzberg S.L."/>
            <person name="Delcher A."/>
            <person name="Utterback T.R."/>
            <person name="Weidman J.F."/>
            <person name="Khouri H.M."/>
            <person name="Gill J."/>
            <person name="Mikula A."/>
            <person name="Bishai W."/>
            <person name="Jacobs W.R. Jr."/>
            <person name="Venter J.C."/>
            <person name="Fraser C.M."/>
        </authorList>
    </citation>
    <scope>NUCLEOTIDE SEQUENCE [LARGE SCALE GENOMIC DNA]</scope>
    <source>
        <strain>CDC 1551 / Oshkosh</strain>
    </source>
</reference>
<keyword id="KW-1003">Cell membrane</keyword>
<keyword id="KW-0472">Membrane</keyword>
<keyword id="KW-1185">Reference proteome</keyword>
<keyword id="KW-0812">Transmembrane</keyword>
<keyword id="KW-1133">Transmembrane helix</keyword>
<accession>P9WFS4</accession>
<accession>L0T4E5</accession>
<accession>P67115</accession>
<accession>P96915</accession>
<feature type="chain" id="PRO_0000428486" description="TVP38/TMEM64 family membrane protein MT0653">
    <location>
        <begin position="1"/>
        <end position="246"/>
    </location>
</feature>
<feature type="transmembrane region" description="Helical" evidence="1">
    <location>
        <begin position="19"/>
        <end position="39"/>
    </location>
</feature>
<feature type="transmembrane region" description="Helical" evidence="1">
    <location>
        <begin position="57"/>
        <end position="77"/>
    </location>
</feature>
<feature type="transmembrane region" description="Helical" evidence="1">
    <location>
        <begin position="83"/>
        <end position="103"/>
    </location>
</feature>
<feature type="transmembrane region" description="Helical" evidence="1">
    <location>
        <begin position="157"/>
        <end position="177"/>
    </location>
</feature>
<feature type="transmembrane region" description="Helical" evidence="1">
    <location>
        <begin position="196"/>
        <end position="216"/>
    </location>
</feature>
<sequence>MSTHNDSAPTSRRRHIVRLVVFAGFLVGMFYLVAATDVIDVAAVRGAVSATGPAAPLTYVVVSAVLGALFVPGPILAASSGLLFGPLVGVFVTLGATVGTAVVASLVGRRAGRASARALLGGERADRTDALIERCGLWAVVGQRFVPGISDAFASYAFGTFGVPLWQMAVGAFIGSAPRAFAYTALGAAIGDRSPLLASCAIAVWCVTAIIGAFAARHGYRQWRAHARGDGADGGVEDPDREVGAR</sequence>
<name>Y625_MYCTO</name>
<dbReference type="EMBL" id="AE000516">
    <property type="protein sequence ID" value="AAK44877.1"/>
    <property type="status" value="ALT_INIT"/>
    <property type="molecule type" value="Genomic_DNA"/>
</dbReference>
<dbReference type="PIR" id="F70611">
    <property type="entry name" value="F70611"/>
</dbReference>
<dbReference type="RefSeq" id="WP_003403239.1">
    <property type="nucleotide sequence ID" value="NZ_KK341227.1"/>
</dbReference>
<dbReference type="KEGG" id="mtc:MT0653"/>
<dbReference type="PATRIC" id="fig|83331.31.peg.693"/>
<dbReference type="HOGENOM" id="CLU_038944_4_2_11"/>
<dbReference type="Proteomes" id="UP000001020">
    <property type="component" value="Chromosome"/>
</dbReference>
<dbReference type="GO" id="GO:0005886">
    <property type="term" value="C:plasma membrane"/>
    <property type="evidence" value="ECO:0007669"/>
    <property type="project" value="UniProtKB-SubCell"/>
</dbReference>
<dbReference type="InterPro" id="IPR015414">
    <property type="entry name" value="TMEM64"/>
</dbReference>
<dbReference type="InterPro" id="IPR032816">
    <property type="entry name" value="VTT_dom"/>
</dbReference>
<dbReference type="PANTHER" id="PTHR12677">
    <property type="entry name" value="GOLGI APPARATUS MEMBRANE PROTEIN TVP38-RELATED"/>
    <property type="match status" value="1"/>
</dbReference>
<dbReference type="PANTHER" id="PTHR12677:SF58">
    <property type="entry name" value="TVP38_TMEM64 FAMILY MEMBRANE PROTEIN RV0625C"/>
    <property type="match status" value="1"/>
</dbReference>
<dbReference type="Pfam" id="PF09335">
    <property type="entry name" value="VTT_dom"/>
    <property type="match status" value="1"/>
</dbReference>
<protein>
    <recommendedName>
        <fullName>TVP38/TMEM64 family membrane protein MT0653</fullName>
    </recommendedName>
</protein>
<comment type="subcellular location">
    <subcellularLocation>
        <location evidence="2">Cell membrane</location>
        <topology evidence="2">Multi-pass membrane protein</topology>
    </subcellularLocation>
</comment>
<comment type="similarity">
    <text evidence="2">Belongs to the TVP38/TMEM64 family.</text>
</comment>
<comment type="sequence caution" evidence="2">
    <conflict type="erroneous initiation">
        <sequence resource="EMBL-CDS" id="AAK44877"/>
    </conflict>
</comment>
<proteinExistence type="inferred from homology"/>
<organism>
    <name type="scientific">Mycobacterium tuberculosis (strain CDC 1551 / Oshkosh)</name>
    <dbReference type="NCBI Taxonomy" id="83331"/>
    <lineage>
        <taxon>Bacteria</taxon>
        <taxon>Bacillati</taxon>
        <taxon>Actinomycetota</taxon>
        <taxon>Actinomycetes</taxon>
        <taxon>Mycobacteriales</taxon>
        <taxon>Mycobacteriaceae</taxon>
        <taxon>Mycobacterium</taxon>
        <taxon>Mycobacterium tuberculosis complex</taxon>
    </lineage>
</organism>
<evidence type="ECO:0000255" key="1"/>
<evidence type="ECO:0000305" key="2"/>